<feature type="chain" id="PRO_0000387673" description="Propanal dehydrogenase (CoA-propanoylating)">
    <location>
        <begin position="1"/>
        <end position="303"/>
    </location>
</feature>
<feature type="active site" description="Acyl-thioester intermediate" evidence="2">
    <location>
        <position position="127"/>
    </location>
</feature>
<feature type="binding site" evidence="2">
    <location>
        <begin position="12"/>
        <end position="15"/>
    </location>
    <ligand>
        <name>NAD(+)</name>
        <dbReference type="ChEBI" id="CHEBI:57540"/>
    </ligand>
</feature>
<feature type="binding site" evidence="2">
    <location>
        <begin position="158"/>
        <end position="166"/>
    </location>
    <ligand>
        <name>NAD(+)</name>
        <dbReference type="ChEBI" id="CHEBI:57540"/>
    </ligand>
</feature>
<feature type="binding site" evidence="2">
    <location>
        <position position="277"/>
    </location>
    <ligand>
        <name>NAD(+)</name>
        <dbReference type="ChEBI" id="CHEBI:57540"/>
    </ligand>
</feature>
<organism>
    <name type="scientific">Mycobacterium bovis (strain ATCC BAA-935 / AF2122/97)</name>
    <dbReference type="NCBI Taxonomy" id="233413"/>
    <lineage>
        <taxon>Bacteria</taxon>
        <taxon>Bacillati</taxon>
        <taxon>Actinomycetota</taxon>
        <taxon>Actinomycetes</taxon>
        <taxon>Mycobacteriales</taxon>
        <taxon>Mycobacteriaceae</taxon>
        <taxon>Mycobacterium</taxon>
        <taxon>Mycobacterium tuberculosis complex</taxon>
    </lineage>
</organism>
<protein>
    <recommendedName>
        <fullName evidence="1">Propanal dehydrogenase (CoA-propanoylating)</fullName>
        <ecNumber evidence="1">1.2.1.87</ecNumber>
    </recommendedName>
    <alternativeName>
        <fullName evidence="2">Acetaldehyde dehydrogenase</fullName>
        <ecNumber evidence="2">1.2.1.10</ecNumber>
    </alternativeName>
    <alternativeName>
        <fullName evidence="2">Acetaldehyde dehydrogenase [acetylating]</fullName>
    </alternativeName>
</protein>
<name>ACDH_MYCBO</name>
<keyword id="KW-0058">Aromatic hydrocarbons catabolism</keyword>
<keyword id="KW-0520">NAD</keyword>
<keyword id="KW-0560">Oxidoreductase</keyword>
<keyword id="KW-1185">Reference proteome</keyword>
<dbReference type="EC" id="1.2.1.87" evidence="1"/>
<dbReference type="EC" id="1.2.1.10" evidence="2"/>
<dbReference type="EMBL" id="LT708304">
    <property type="protein sequence ID" value="SIU02192.1"/>
    <property type="molecule type" value="Genomic_DNA"/>
</dbReference>
<dbReference type="RefSeq" id="NP_857204.1">
    <property type="nucleotide sequence ID" value="NC_002945.3"/>
</dbReference>
<dbReference type="RefSeq" id="WP_003419251.1">
    <property type="nucleotide sequence ID" value="NC_002945.4"/>
</dbReference>
<dbReference type="SMR" id="Q7TTR4"/>
<dbReference type="KEGG" id="mbo:BQ2027_MB3565C"/>
<dbReference type="PATRIC" id="fig|233413.5.peg.3908"/>
<dbReference type="Proteomes" id="UP000001419">
    <property type="component" value="Chromosome"/>
</dbReference>
<dbReference type="GO" id="GO:0008774">
    <property type="term" value="F:acetaldehyde dehydrogenase (acetylating) activity"/>
    <property type="evidence" value="ECO:0007669"/>
    <property type="project" value="UniProtKB-UniRule"/>
</dbReference>
<dbReference type="GO" id="GO:0051287">
    <property type="term" value="F:NAD binding"/>
    <property type="evidence" value="ECO:0007669"/>
    <property type="project" value="UniProtKB-UniRule"/>
</dbReference>
<dbReference type="GO" id="GO:0009056">
    <property type="term" value="P:catabolic process"/>
    <property type="evidence" value="ECO:0007669"/>
    <property type="project" value="UniProtKB-KW"/>
</dbReference>
<dbReference type="CDD" id="cd23933">
    <property type="entry name" value="ALDH_C"/>
    <property type="match status" value="1"/>
</dbReference>
<dbReference type="Gene3D" id="3.30.360.10">
    <property type="entry name" value="Dihydrodipicolinate Reductase, domain 2"/>
    <property type="match status" value="1"/>
</dbReference>
<dbReference type="Gene3D" id="3.40.50.720">
    <property type="entry name" value="NAD(P)-binding Rossmann-like Domain"/>
    <property type="match status" value="1"/>
</dbReference>
<dbReference type="HAMAP" id="MF_01657">
    <property type="entry name" value="Ac_ald_DH_ac"/>
    <property type="match status" value="1"/>
</dbReference>
<dbReference type="InterPro" id="IPR003361">
    <property type="entry name" value="Acetaldehyde_dehydrogenase"/>
</dbReference>
<dbReference type="InterPro" id="IPR015426">
    <property type="entry name" value="Acetylaldehyde_DH_C"/>
</dbReference>
<dbReference type="InterPro" id="IPR036291">
    <property type="entry name" value="NAD(P)-bd_dom_sf"/>
</dbReference>
<dbReference type="InterPro" id="IPR000534">
    <property type="entry name" value="Semialdehyde_DH_NAD-bd"/>
</dbReference>
<dbReference type="NCBIfam" id="TIGR03215">
    <property type="entry name" value="ac_ald_DH_ac"/>
    <property type="match status" value="1"/>
</dbReference>
<dbReference type="NCBIfam" id="NF006157">
    <property type="entry name" value="PRK08300.1"/>
    <property type="match status" value="1"/>
</dbReference>
<dbReference type="Pfam" id="PF09290">
    <property type="entry name" value="AcetDehyd-dimer"/>
    <property type="match status" value="1"/>
</dbReference>
<dbReference type="Pfam" id="PF01118">
    <property type="entry name" value="Semialdhyde_dh"/>
    <property type="match status" value="1"/>
</dbReference>
<dbReference type="PIRSF" id="PIRSF015689">
    <property type="entry name" value="Actaldh_dh_actl"/>
    <property type="match status" value="1"/>
</dbReference>
<dbReference type="SMART" id="SM00859">
    <property type="entry name" value="Semialdhyde_dh"/>
    <property type="match status" value="1"/>
</dbReference>
<dbReference type="SUPFAM" id="SSF55347">
    <property type="entry name" value="Glyceraldehyde-3-phosphate dehydrogenase-like, C-terminal domain"/>
    <property type="match status" value="1"/>
</dbReference>
<dbReference type="SUPFAM" id="SSF51735">
    <property type="entry name" value="NAD(P)-binding Rossmann-fold domains"/>
    <property type="match status" value="1"/>
</dbReference>
<gene>
    <name evidence="1" type="primary">hsaG</name>
    <name type="ordered locus">BQ2027_MB3565C</name>
</gene>
<proteinExistence type="inferred from homology"/>
<reference key="1">
    <citation type="journal article" date="2003" name="Proc. Natl. Acad. Sci. U.S.A.">
        <title>The complete genome sequence of Mycobacterium bovis.</title>
        <authorList>
            <person name="Garnier T."/>
            <person name="Eiglmeier K."/>
            <person name="Camus J.-C."/>
            <person name="Medina N."/>
            <person name="Mansoor H."/>
            <person name="Pryor M."/>
            <person name="Duthoy S."/>
            <person name="Grondin S."/>
            <person name="Lacroix C."/>
            <person name="Monsempe C."/>
            <person name="Simon S."/>
            <person name="Harris B."/>
            <person name="Atkin R."/>
            <person name="Doggett J."/>
            <person name="Mayes R."/>
            <person name="Keating L."/>
            <person name="Wheeler P.R."/>
            <person name="Parkhill J."/>
            <person name="Barrell B.G."/>
            <person name="Cole S.T."/>
            <person name="Gordon S.V."/>
            <person name="Hewinson R.G."/>
        </authorList>
    </citation>
    <scope>NUCLEOTIDE SEQUENCE [LARGE SCALE GENOMIC DNA]</scope>
    <source>
        <strain>ATCC BAA-935 / AF2122/97</strain>
    </source>
</reference>
<reference key="2">
    <citation type="journal article" date="2017" name="Genome Announc.">
        <title>Updated reference genome sequence and annotation of Mycobacterium bovis AF2122/97.</title>
        <authorList>
            <person name="Malone K.M."/>
            <person name="Farrell D."/>
            <person name="Stuber T.P."/>
            <person name="Schubert O.T."/>
            <person name="Aebersold R."/>
            <person name="Robbe-Austerman S."/>
            <person name="Gordon S.V."/>
        </authorList>
    </citation>
    <scope>NUCLEOTIDE SEQUENCE [LARGE SCALE GENOMIC DNA]</scope>
    <scope>GENOME REANNOTATION</scope>
    <source>
        <strain>ATCC BAA-935 / AF2122/97</strain>
    </source>
</reference>
<accession>Q7TTR4</accession>
<accession>A0A1R3Y4I3</accession>
<accession>X2BP90</accession>
<comment type="function">
    <text evidence="1">Involved in cholesterol degradation. Catalyzes the conversion of propanal to propanoyl-CoA, using NAD(+) and coenzyme A.</text>
</comment>
<comment type="catalytic activity">
    <reaction evidence="1">
        <text>propanal + NAD(+) + CoA = propanoyl-CoA + NADH + H(+)</text>
        <dbReference type="Rhea" id="RHEA:36027"/>
        <dbReference type="ChEBI" id="CHEBI:15378"/>
        <dbReference type="ChEBI" id="CHEBI:17153"/>
        <dbReference type="ChEBI" id="CHEBI:57287"/>
        <dbReference type="ChEBI" id="CHEBI:57392"/>
        <dbReference type="ChEBI" id="CHEBI:57540"/>
        <dbReference type="ChEBI" id="CHEBI:57945"/>
        <dbReference type="EC" id="1.2.1.87"/>
    </reaction>
    <physiologicalReaction direction="left-to-right" evidence="1">
        <dbReference type="Rhea" id="RHEA:36028"/>
    </physiologicalReaction>
</comment>
<comment type="catalytic activity">
    <reaction evidence="1 2">
        <text>acetaldehyde + NAD(+) + CoA = acetyl-CoA + NADH + H(+)</text>
        <dbReference type="Rhea" id="RHEA:23288"/>
        <dbReference type="ChEBI" id="CHEBI:15343"/>
        <dbReference type="ChEBI" id="CHEBI:15378"/>
        <dbReference type="ChEBI" id="CHEBI:57287"/>
        <dbReference type="ChEBI" id="CHEBI:57288"/>
        <dbReference type="ChEBI" id="CHEBI:57540"/>
        <dbReference type="ChEBI" id="CHEBI:57945"/>
        <dbReference type="EC" id="1.2.1.10"/>
    </reaction>
    <physiologicalReaction direction="left-to-right" evidence="1">
        <dbReference type="Rhea" id="RHEA:23289"/>
    </physiologicalReaction>
</comment>
<comment type="subunit">
    <text evidence="1">Monomer. Forms a heterotetramer composed of two aldolase (HsaF) and two dehydrogenase (HsaG) subunits.</text>
</comment>
<comment type="similarity">
    <text evidence="2">Belongs to the acetaldehyde dehydrogenase family.</text>
</comment>
<sequence>MPSKAKVAIVGSGNISTDLLYKLLRSEWLEPRWMVGIDPESDGLARAAKLGLETTHEGVDWLLAQPDKPDLVFEATSAYVHRDAAPKYAEAGIRAIDLTPAAVGPAVIPPANLREHLDAPNVNMITCGGQATIPIVYAVSRIVEVPYAEIVASVASVSAGPGTRANIDEFTKTTARGVQTIGGAARGKAIIILNPADPPMIMRDTIFCAIPTDADREAIAASIHDVVKEVQTYVPGYRLLNEPQFDEPSINSGGQALVTTFVEVEGAGDYLPPYAGNLDIMTAAATKVGEEIAKETLVVGGAR</sequence>
<evidence type="ECO:0000250" key="1">
    <source>
        <dbReference type="UniProtKB" id="P9WQH3"/>
    </source>
</evidence>
<evidence type="ECO:0000255" key="2">
    <source>
        <dbReference type="HAMAP-Rule" id="MF_01657"/>
    </source>
</evidence>